<proteinExistence type="evidence at transcript level"/>
<accession>A9XMT5</accession>
<accession>Q5VRL9</accession>
<evidence type="ECO:0000250" key="1">
    <source>
        <dbReference type="UniProtKB" id="A9XMT3"/>
    </source>
</evidence>
<evidence type="ECO:0000255" key="2"/>
<evidence type="ECO:0000256" key="3">
    <source>
        <dbReference type="SAM" id="MobiDB-lite"/>
    </source>
</evidence>
<evidence type="ECO:0000269" key="4">
    <source>
    </source>
</evidence>
<evidence type="ECO:0000269" key="5">
    <source>
    </source>
</evidence>
<evidence type="ECO:0000303" key="6">
    <source>
    </source>
</evidence>
<evidence type="ECO:0000303" key="7">
    <source>
    </source>
</evidence>
<evidence type="ECO:0000305" key="8"/>
<evidence type="ECO:0000312" key="9">
    <source>
        <dbReference type="EMBL" id="BAD67768.1"/>
    </source>
</evidence>
<evidence type="ECO:0000312" key="10">
    <source>
        <dbReference type="EMBL" id="BAD67908.1"/>
    </source>
</evidence>
<evidence type="ECO:0000312" key="11">
    <source>
        <dbReference type="EMBL" id="BAS95841.1"/>
    </source>
</evidence>
<protein>
    <recommendedName>
        <fullName evidence="7">Protein CYCLOPS</fullName>
        <shortName evidence="7">OsCYCLOPS</shortName>
    </recommendedName>
    <alternativeName>
        <fullName evidence="6">Protein IPD3 homolog</fullName>
        <shortName evidence="6">OsIPD3</shortName>
    </alternativeName>
</protein>
<feature type="chain" id="PRO_0000444701" description="Protein CYCLOPS">
    <location>
        <begin position="1"/>
        <end position="506"/>
    </location>
</feature>
<feature type="region of interest" description="Disordered" evidence="3">
    <location>
        <begin position="193"/>
        <end position="223"/>
    </location>
</feature>
<feature type="region of interest" description="Disordered" evidence="3">
    <location>
        <begin position="385"/>
        <end position="434"/>
    </location>
</feature>
<feature type="coiled-coil region" evidence="2">
    <location>
        <begin position="441"/>
        <end position="506"/>
    </location>
</feature>
<feature type="short sequence motif" description="Nuclear localization signal" evidence="2">
    <location>
        <begin position="415"/>
        <end position="418"/>
    </location>
</feature>
<feature type="compositionally biased region" description="Low complexity" evidence="3">
    <location>
        <begin position="202"/>
        <end position="219"/>
    </location>
</feature>
<feature type="compositionally biased region" description="Basic and acidic residues" evidence="3">
    <location>
        <begin position="385"/>
        <end position="394"/>
    </location>
</feature>
<feature type="compositionally biased region" description="Basic and acidic residues" evidence="3">
    <location>
        <begin position="422"/>
        <end position="432"/>
    </location>
</feature>
<name>CCLOP_ORYSJ</name>
<keyword id="KW-0175">Coiled coil</keyword>
<keyword id="KW-0539">Nucleus</keyword>
<keyword id="KW-1185">Reference proteome</keyword>
<dbReference type="EMBL" id="EF569223">
    <property type="protein sequence ID" value="ABU63670.1"/>
    <property type="molecule type" value="mRNA"/>
</dbReference>
<dbReference type="EMBL" id="AP001389">
    <property type="protein sequence ID" value="BAD67768.1"/>
    <property type="status" value="ALT_SEQ"/>
    <property type="molecule type" value="Genomic_DNA"/>
</dbReference>
<dbReference type="EMBL" id="AP002837">
    <property type="protein sequence ID" value="BAD67908.1"/>
    <property type="status" value="ALT_SEQ"/>
    <property type="molecule type" value="Genomic_DNA"/>
</dbReference>
<dbReference type="EMBL" id="AP008212">
    <property type="protein sequence ID" value="BAF18528.1"/>
    <property type="status" value="ALT_SEQ"/>
    <property type="molecule type" value="Genomic_DNA"/>
</dbReference>
<dbReference type="EMBL" id="AP014962">
    <property type="protein sequence ID" value="BAS95841.1"/>
    <property type="molecule type" value="Genomic_DNA"/>
</dbReference>
<dbReference type="SMR" id="A9XMT5"/>
<dbReference type="FunCoup" id="A9XMT5">
    <property type="interactions" value="820"/>
</dbReference>
<dbReference type="STRING" id="39947.A9XMT5"/>
<dbReference type="PaxDb" id="39947-A9XMT5"/>
<dbReference type="EnsemblPlants" id="Os06t0115600-01">
    <property type="protein sequence ID" value="Os06t0115600-01"/>
    <property type="gene ID" value="Os06g0115600"/>
</dbReference>
<dbReference type="Gramene" id="Os06t0115600-01">
    <property type="protein sequence ID" value="Os06t0115600-01"/>
    <property type="gene ID" value="Os06g0115600"/>
</dbReference>
<dbReference type="KEGG" id="dosa:Os06g0115600"/>
<dbReference type="eggNOG" id="ENOG502QQ45">
    <property type="taxonomic scope" value="Eukaryota"/>
</dbReference>
<dbReference type="HOGENOM" id="CLU_515253_0_0_1"/>
<dbReference type="InParanoid" id="A9XMT5"/>
<dbReference type="OMA" id="WLMNGEA"/>
<dbReference type="Proteomes" id="UP000000763">
    <property type="component" value="Chromosome 6"/>
</dbReference>
<dbReference type="Proteomes" id="UP000059680">
    <property type="component" value="Chromosome 6"/>
</dbReference>
<dbReference type="GO" id="GO:0005634">
    <property type="term" value="C:nucleus"/>
    <property type="evidence" value="ECO:0007669"/>
    <property type="project" value="UniProtKB-SubCell"/>
</dbReference>
<dbReference type="GO" id="GO:0043565">
    <property type="term" value="F:sequence-specific DNA binding"/>
    <property type="evidence" value="ECO:0007669"/>
    <property type="project" value="InterPro"/>
</dbReference>
<dbReference type="GO" id="GO:0036377">
    <property type="term" value="P:arbuscular mycorrhizal association"/>
    <property type="evidence" value="ECO:0000315"/>
    <property type="project" value="UniProtKB"/>
</dbReference>
<dbReference type="InterPro" id="IPR040036">
    <property type="entry name" value="CYCLOPS"/>
</dbReference>
<dbReference type="PANTHER" id="PTHR36890">
    <property type="entry name" value="PROTEIN CYCLOPS"/>
    <property type="match status" value="1"/>
</dbReference>
<dbReference type="PANTHER" id="PTHR36890:SF1">
    <property type="entry name" value="PROTEIN CYCLOPS"/>
    <property type="match status" value="1"/>
</dbReference>
<gene>
    <name evidence="7" type="primary">CYCLOPS</name>
    <name evidence="6" type="synonym">IPD3</name>
    <name evidence="11" type="ordered locus">Os06g0115600</name>
    <name evidence="8" type="ordered locus">LOC_Os06g02520</name>
    <name evidence="10" type="ORF">OSJNBa0019F11.17</name>
    <name evidence="9" type="ORF">P0541H01.39</name>
</gene>
<sequence length="506" mass="56092">MEGRGLSELFRNTSEDMFLKAMMENSMGVAAAAPSMEMMGFRNLSQGFREDSEELFNSWLMNGEIPGFSAMNNRPRQPSRLSSEAAGFPNQQHEIAQEHFPTDNLIPQNLAVHSEFTMNHNQQQLKNAAEKGMQASDLLLAKAWFHSTQPMTRSRSSELRKRYAAMQSNMPPITTETIETANKLRQDLTNASTVNSAPMSNTPSQTPTFVSPSSSSTSPLDNPHIVAQDTITSVVSMLKDTLERKKLSSHANGDTSSGISFGFYDSQHFQQNILGGTDIFPLVTTSQIQDSVMLPKVERPTEQGSGNFVAPANQVWLGTASREPSQSGSSTAIPAPSAGFEVCDDLPPIGQAMTVCESTRTNAANGNGTADCRSKGKDFRERILKENLKDDRKKGSLTRMGSISSEQADKGDPTKKRRVERSRKMAEAKERSSTPVIPSDIQVVLKRCETLEKEVRSLKLNLSFMNRKDSEQTKQIEELQKQNEDLVEEKERLLEEIERIVSDTNT</sequence>
<reference key="1">
    <citation type="journal article" date="2008" name="Proc. Natl. Acad. Sci. U.S.A.">
        <title>CYCLOPS, a mediator of symbiotic intracellular accommodation.</title>
        <authorList>
            <person name="Yano K."/>
            <person name="Yoshida S."/>
            <person name="Mueller J."/>
            <person name="Singh S."/>
            <person name="Banba M."/>
            <person name="Vickers K."/>
            <person name="Markmann K."/>
            <person name="White C."/>
            <person name="Schuller B."/>
            <person name="Sato S."/>
            <person name="Asamizu E."/>
            <person name="Tabata S."/>
            <person name="Murooka Y."/>
            <person name="Perry J."/>
            <person name="Wang T.L."/>
            <person name="Kawaguchi M."/>
            <person name="Imaizumi-Anraku H."/>
            <person name="Hayashi M."/>
            <person name="Parniske M."/>
        </authorList>
    </citation>
    <scope>NUCLEOTIDE SEQUENCE [MRNA]</scope>
    <scope>FUNCTION</scope>
    <scope>DISRUPTION PHENOTYPE</scope>
</reference>
<reference key="2">
    <citation type="journal article" date="2005" name="Nature">
        <title>The map-based sequence of the rice genome.</title>
        <authorList>
            <consortium name="International rice genome sequencing project (IRGSP)"/>
        </authorList>
    </citation>
    <scope>NUCLEOTIDE SEQUENCE [LARGE SCALE GENOMIC DNA]</scope>
    <source>
        <strain>cv. Nipponbare</strain>
    </source>
</reference>
<reference key="3">
    <citation type="journal article" date="2008" name="Nucleic Acids Res.">
        <title>The rice annotation project database (RAP-DB): 2008 update.</title>
        <authorList>
            <consortium name="The rice annotation project (RAP)"/>
        </authorList>
    </citation>
    <scope>GENOME REANNOTATION</scope>
    <source>
        <strain>cv. Nipponbare</strain>
    </source>
</reference>
<reference key="4">
    <citation type="journal article" date="2013" name="Rice">
        <title>Improvement of the Oryza sativa Nipponbare reference genome using next generation sequence and optical map data.</title>
        <authorList>
            <person name="Kawahara Y."/>
            <person name="de la Bastide M."/>
            <person name="Hamilton J.P."/>
            <person name="Kanamori H."/>
            <person name="McCombie W.R."/>
            <person name="Ouyang S."/>
            <person name="Schwartz D.C."/>
            <person name="Tanaka T."/>
            <person name="Wu J."/>
            <person name="Zhou S."/>
            <person name="Childs K.L."/>
            <person name="Davidson R.M."/>
            <person name="Lin H."/>
            <person name="Quesada-Ocampo L."/>
            <person name="Vaillancourt B."/>
            <person name="Sakai H."/>
            <person name="Lee S.S."/>
            <person name="Kim J."/>
            <person name="Numa H."/>
            <person name="Itoh T."/>
            <person name="Buell C.R."/>
            <person name="Matsumoto T."/>
        </authorList>
    </citation>
    <scope>GENOME REANNOTATION</scope>
    <source>
        <strain>cv. Nipponbare</strain>
    </source>
</reference>
<reference key="5">
    <citation type="journal article" date="2008" name="New Phytol.">
        <title>OsIPD3, an ortholog of the Medicago truncatula DMI3 interacting protein IPD3, is required for mycorrhizal symbiosis in rice.</title>
        <authorList>
            <person name="Chen C."/>
            <person name="Ane J.M."/>
            <person name="Zhu H."/>
        </authorList>
    </citation>
    <scope>FUNCTION</scope>
    <scope>TISSUE SPECIFICITY</scope>
    <scope>INDUCTION BY ARBUSCULAR MYCORRHIZA FUNGUS</scope>
    <scope>DISRUPTION PHENOTYPE</scope>
</reference>
<comment type="function">
    <text evidence="4 5">Involved in arbuscular mycorrhizal (AM) symbiosis. Required for fungal infection in roots and arbuscule development during AM symbiosis.</text>
</comment>
<comment type="subcellular location">
    <subcellularLocation>
        <location evidence="1">Nucleus</location>
    </subcellularLocation>
</comment>
<comment type="tissue specificity">
    <text evidence="4">Highly epressed in roots. Expressed at very low levels in leaves, stems and panicles.</text>
</comment>
<comment type="induction">
    <text evidence="4">Induced in roots 7 weeks after inoculation with the arbuscular mycorrhiza (AM) fungus Glomus intraradices.</text>
</comment>
<comment type="disruption phenotype">
    <text evidence="4 5">No visible phenotype under normal growth conditions, but roots of mutant plants are impaired in the interaction with the arbuscular mycorrhiza (AM) fungus Glomus intraradices.</text>
</comment>
<comment type="similarity">
    <text evidence="8">Belongs to the CYCLOPS family.</text>
</comment>
<comment type="sequence caution" evidence="8">
    <conflict type="erroneous gene model prediction">
        <sequence resource="EMBL-CDS" id="BAD67768"/>
    </conflict>
</comment>
<comment type="sequence caution" evidence="8">
    <conflict type="erroneous gene model prediction">
        <sequence resource="EMBL-CDS" id="BAD67908"/>
    </conflict>
</comment>
<comment type="sequence caution" evidence="8">
    <conflict type="erroneous gene model prediction">
        <sequence resource="EMBL-CDS" id="BAF18528"/>
    </conflict>
</comment>
<organism>
    <name type="scientific">Oryza sativa subsp. japonica</name>
    <name type="common">Rice</name>
    <dbReference type="NCBI Taxonomy" id="39947"/>
    <lineage>
        <taxon>Eukaryota</taxon>
        <taxon>Viridiplantae</taxon>
        <taxon>Streptophyta</taxon>
        <taxon>Embryophyta</taxon>
        <taxon>Tracheophyta</taxon>
        <taxon>Spermatophyta</taxon>
        <taxon>Magnoliopsida</taxon>
        <taxon>Liliopsida</taxon>
        <taxon>Poales</taxon>
        <taxon>Poaceae</taxon>
        <taxon>BOP clade</taxon>
        <taxon>Oryzoideae</taxon>
        <taxon>Oryzeae</taxon>
        <taxon>Oryzinae</taxon>
        <taxon>Oryza</taxon>
        <taxon>Oryza sativa</taxon>
    </lineage>
</organism>